<name>RLMKL_YERPB</name>
<comment type="function">
    <text evidence="1">Specifically methylates the guanine in position 2445 (m2G2445) and the guanine in position 2069 (m7G2069) of 23S rRNA.</text>
</comment>
<comment type="catalytic activity">
    <reaction evidence="1">
        <text>guanosine(2445) in 23S rRNA + S-adenosyl-L-methionine = N(2)-methylguanosine(2445) in 23S rRNA + S-adenosyl-L-homocysteine + H(+)</text>
        <dbReference type="Rhea" id="RHEA:42740"/>
        <dbReference type="Rhea" id="RHEA-COMP:10215"/>
        <dbReference type="Rhea" id="RHEA-COMP:10216"/>
        <dbReference type="ChEBI" id="CHEBI:15378"/>
        <dbReference type="ChEBI" id="CHEBI:57856"/>
        <dbReference type="ChEBI" id="CHEBI:59789"/>
        <dbReference type="ChEBI" id="CHEBI:74269"/>
        <dbReference type="ChEBI" id="CHEBI:74481"/>
        <dbReference type="EC" id="2.1.1.173"/>
    </reaction>
</comment>
<comment type="catalytic activity">
    <reaction evidence="1">
        <text>guanosine(2069) in 23S rRNA + S-adenosyl-L-methionine = N(2)-methylguanosine(2069) in 23S rRNA + S-adenosyl-L-homocysteine + H(+)</text>
        <dbReference type="Rhea" id="RHEA:43772"/>
        <dbReference type="Rhea" id="RHEA-COMP:10688"/>
        <dbReference type="Rhea" id="RHEA-COMP:10689"/>
        <dbReference type="ChEBI" id="CHEBI:15378"/>
        <dbReference type="ChEBI" id="CHEBI:57856"/>
        <dbReference type="ChEBI" id="CHEBI:59789"/>
        <dbReference type="ChEBI" id="CHEBI:74269"/>
        <dbReference type="ChEBI" id="CHEBI:74481"/>
        <dbReference type="EC" id="2.1.1.264"/>
    </reaction>
</comment>
<comment type="subcellular location">
    <subcellularLocation>
        <location evidence="1">Cytoplasm</location>
    </subcellularLocation>
</comment>
<comment type="similarity">
    <text evidence="1">Belongs to the methyltransferase superfamily. RlmKL family.</text>
</comment>
<reference key="1">
    <citation type="submission" date="2008-04" db="EMBL/GenBank/DDBJ databases">
        <title>Complete sequence of Yersinia pseudotuberculosis PB1/+.</title>
        <authorList>
            <person name="Copeland A."/>
            <person name="Lucas S."/>
            <person name="Lapidus A."/>
            <person name="Glavina del Rio T."/>
            <person name="Dalin E."/>
            <person name="Tice H."/>
            <person name="Bruce D."/>
            <person name="Goodwin L."/>
            <person name="Pitluck S."/>
            <person name="Munk A.C."/>
            <person name="Brettin T."/>
            <person name="Detter J.C."/>
            <person name="Han C."/>
            <person name="Tapia R."/>
            <person name="Schmutz J."/>
            <person name="Larimer F."/>
            <person name="Land M."/>
            <person name="Hauser L."/>
            <person name="Challacombe J.F."/>
            <person name="Green L."/>
            <person name="Lindler L.E."/>
            <person name="Nikolich M.P."/>
            <person name="Richardson P."/>
        </authorList>
    </citation>
    <scope>NUCLEOTIDE SEQUENCE [LARGE SCALE GENOMIC DNA]</scope>
    <source>
        <strain>PB1/+</strain>
    </source>
</reference>
<protein>
    <recommendedName>
        <fullName evidence="1">Ribosomal RNA large subunit methyltransferase K/L</fullName>
    </recommendedName>
    <domain>
        <recommendedName>
            <fullName evidence="1">23S rRNA m2G2445 methyltransferase</fullName>
            <ecNumber evidence="1">2.1.1.173</ecNumber>
        </recommendedName>
        <alternativeName>
            <fullName evidence="1">rRNA (guanine-N(2)-)-methyltransferase RlmL</fullName>
        </alternativeName>
    </domain>
    <domain>
        <recommendedName>
            <fullName evidence="1">23S rRNA m7G2069 methyltransferase</fullName>
            <ecNumber evidence="1">2.1.1.264</ecNumber>
        </recommendedName>
        <alternativeName>
            <fullName evidence="1">rRNA (guanine-N(7)-)-methyltransferase RlmK</fullName>
        </alternativeName>
    </domain>
</protein>
<evidence type="ECO:0000255" key="1">
    <source>
        <dbReference type="HAMAP-Rule" id="MF_01858"/>
    </source>
</evidence>
<feature type="chain" id="PRO_0000366872" description="Ribosomal RNA large subunit methyltransferase K/L">
    <location>
        <begin position="1"/>
        <end position="706"/>
    </location>
</feature>
<feature type="domain" description="THUMP" evidence="1">
    <location>
        <begin position="43"/>
        <end position="154"/>
    </location>
</feature>
<dbReference type="EC" id="2.1.1.173" evidence="1"/>
<dbReference type="EC" id="2.1.1.264" evidence="1"/>
<dbReference type="EMBL" id="CP001048">
    <property type="protein sequence ID" value="ACC88518.1"/>
    <property type="molecule type" value="Genomic_DNA"/>
</dbReference>
<dbReference type="RefSeq" id="WP_012413611.1">
    <property type="nucleotide sequence ID" value="NZ_CP009780.1"/>
</dbReference>
<dbReference type="SMR" id="B2JYS1"/>
<dbReference type="GeneID" id="49786473"/>
<dbReference type="KEGG" id="ypb:YPTS_1546"/>
<dbReference type="PATRIC" id="fig|502801.10.peg.912"/>
<dbReference type="GO" id="GO:0005737">
    <property type="term" value="C:cytoplasm"/>
    <property type="evidence" value="ECO:0007669"/>
    <property type="project" value="UniProtKB-SubCell"/>
</dbReference>
<dbReference type="GO" id="GO:0052915">
    <property type="term" value="F:23S rRNA (guanine(2445)-N(2))-methyltransferase activity"/>
    <property type="evidence" value="ECO:0007669"/>
    <property type="project" value="UniProtKB-UniRule"/>
</dbReference>
<dbReference type="GO" id="GO:0003723">
    <property type="term" value="F:RNA binding"/>
    <property type="evidence" value="ECO:0007669"/>
    <property type="project" value="UniProtKB-KW"/>
</dbReference>
<dbReference type="GO" id="GO:0070043">
    <property type="term" value="F:rRNA (guanine-N7-)-methyltransferase activity"/>
    <property type="evidence" value="ECO:0007669"/>
    <property type="project" value="UniProtKB-UniRule"/>
</dbReference>
<dbReference type="CDD" id="cd02440">
    <property type="entry name" value="AdoMet_MTases"/>
    <property type="match status" value="2"/>
</dbReference>
<dbReference type="CDD" id="cd11715">
    <property type="entry name" value="THUMP_AdoMetMT"/>
    <property type="match status" value="1"/>
</dbReference>
<dbReference type="FunFam" id="3.30.750.80:FF:000001">
    <property type="entry name" value="Ribosomal RNA large subunit methyltransferase K/L"/>
    <property type="match status" value="1"/>
</dbReference>
<dbReference type="FunFam" id="3.40.50.150:FF:000039">
    <property type="entry name" value="Ribosomal RNA large subunit methyltransferase K/L"/>
    <property type="match status" value="1"/>
</dbReference>
<dbReference type="Gene3D" id="3.30.2130.30">
    <property type="match status" value="1"/>
</dbReference>
<dbReference type="Gene3D" id="3.30.750.80">
    <property type="entry name" value="RNA methyltransferase domain (HRMD) like"/>
    <property type="match status" value="1"/>
</dbReference>
<dbReference type="Gene3D" id="3.40.50.150">
    <property type="entry name" value="Vaccinia Virus protein VP39"/>
    <property type="match status" value="2"/>
</dbReference>
<dbReference type="HAMAP" id="MF_01858">
    <property type="entry name" value="23SrRNA_methyltr_KL"/>
    <property type="match status" value="1"/>
</dbReference>
<dbReference type="InterPro" id="IPR017244">
    <property type="entry name" value="23SrRNA_methyltr_KL"/>
</dbReference>
<dbReference type="InterPro" id="IPR002052">
    <property type="entry name" value="DNA_methylase_N6_adenine_CS"/>
</dbReference>
<dbReference type="InterPro" id="IPR000241">
    <property type="entry name" value="RlmKL-like_Mtase"/>
</dbReference>
<dbReference type="InterPro" id="IPR053943">
    <property type="entry name" value="RlmKL-like_Mtase_CS"/>
</dbReference>
<dbReference type="InterPro" id="IPR054170">
    <property type="entry name" value="RlmL_1st"/>
</dbReference>
<dbReference type="InterPro" id="IPR019614">
    <property type="entry name" value="SAM-dep_methyl-trfase"/>
</dbReference>
<dbReference type="InterPro" id="IPR029063">
    <property type="entry name" value="SAM-dependent_MTases_sf"/>
</dbReference>
<dbReference type="InterPro" id="IPR004114">
    <property type="entry name" value="THUMP_dom"/>
</dbReference>
<dbReference type="NCBIfam" id="NF008748">
    <property type="entry name" value="PRK11783.1"/>
    <property type="match status" value="1"/>
</dbReference>
<dbReference type="PANTHER" id="PTHR47313">
    <property type="entry name" value="RIBOSOMAL RNA LARGE SUBUNIT METHYLTRANSFERASE K/L"/>
    <property type="match status" value="1"/>
</dbReference>
<dbReference type="PANTHER" id="PTHR47313:SF1">
    <property type="entry name" value="RIBOSOMAL RNA LARGE SUBUNIT METHYLTRANSFERASE K_L"/>
    <property type="match status" value="1"/>
</dbReference>
<dbReference type="Pfam" id="PF10672">
    <property type="entry name" value="Methyltrans_SAM"/>
    <property type="match status" value="1"/>
</dbReference>
<dbReference type="Pfam" id="PF22020">
    <property type="entry name" value="RlmL_1st"/>
    <property type="match status" value="1"/>
</dbReference>
<dbReference type="Pfam" id="PF02926">
    <property type="entry name" value="THUMP"/>
    <property type="match status" value="1"/>
</dbReference>
<dbReference type="Pfam" id="PF01170">
    <property type="entry name" value="UPF0020"/>
    <property type="match status" value="1"/>
</dbReference>
<dbReference type="PIRSF" id="PIRSF037618">
    <property type="entry name" value="RNA_Mtase_bacteria_prd"/>
    <property type="match status" value="1"/>
</dbReference>
<dbReference type="SMART" id="SM00981">
    <property type="entry name" value="THUMP"/>
    <property type="match status" value="1"/>
</dbReference>
<dbReference type="SUPFAM" id="SSF53335">
    <property type="entry name" value="S-adenosyl-L-methionine-dependent methyltransferases"/>
    <property type="match status" value="2"/>
</dbReference>
<dbReference type="PROSITE" id="PS51165">
    <property type="entry name" value="THUMP"/>
    <property type="match status" value="1"/>
</dbReference>
<dbReference type="PROSITE" id="PS01261">
    <property type="entry name" value="UPF0020"/>
    <property type="match status" value="1"/>
</dbReference>
<organism>
    <name type="scientific">Yersinia pseudotuberculosis serotype IB (strain PB1/+)</name>
    <dbReference type="NCBI Taxonomy" id="502801"/>
    <lineage>
        <taxon>Bacteria</taxon>
        <taxon>Pseudomonadati</taxon>
        <taxon>Pseudomonadota</taxon>
        <taxon>Gammaproteobacteria</taxon>
        <taxon>Enterobacterales</taxon>
        <taxon>Yersiniaceae</taxon>
        <taxon>Yersinia</taxon>
    </lineage>
</organism>
<proteinExistence type="inferred from homology"/>
<keyword id="KW-0963">Cytoplasm</keyword>
<keyword id="KW-0489">Methyltransferase</keyword>
<keyword id="KW-0694">RNA-binding</keyword>
<keyword id="KW-0698">rRNA processing</keyword>
<keyword id="KW-0949">S-adenosyl-L-methionine</keyword>
<keyword id="KW-0808">Transferase</keyword>
<sequence>MNSLFASTARGLEELLKSELEALGAHDCKIVQGGVHFQGDDRLMYQSLLWSRLASRILLPLNEFKVYSDLDLYLGVQAIDWPSIFGVDKTFAVHFSGVNDEIRNSQYGALKVKDAIVDSFTRKMDQRPTVAKQQPDIRVNVFLQRDMASVALDLSGEGLHQRGYRDLTGQAPLKENLAAAIIQRSGWQPGTPMVDPMCGSGTLLIEAAMMASDRAPGLHRGHWGFTAWSAFNEALWRELTTEAQVRARRGLLETSSRFFGSDIDRRVIEMARANARRAGVAELITFNANDISKLVNPLPEGPVGTVISNPPYGERLESEPALIALHNMFGRMMKTAFGGWRLSLFSASPELLSCLQLRADREFKAKNGPLDCVQKNYQLTANPQGAGGALVAEDYANRLRKNVKKLDKWAKQQGIECYRLYDADLPDYNVAVDRYGSKVVVQEYAPPKTIDPQKARQRLFDVINATLAVLELPSNQLVLKTRERQKGKNQYEKLAQKGEFLLVSEYNAKLWVNLTDYLDTGLFLDHRIARQMLGKMSQGKDFLNLFAYTGTASVHAGLGGARSTTTVDMSRTYLEWAEKNLRVNGLTGQQHRLIQADCLSWLSNTDEQFDVIFIDPPTFSNSKRMETTFDVQRDHLVLMKELKRLLRRKGTIMFSNNKRGFQMDLAGIAALGLEAKEITALTQSEDFARNRQIHNCWLVTHSQEEK</sequence>
<accession>B2JYS1</accession>
<gene>
    <name evidence="1" type="primary">rlmL</name>
    <name type="ordered locus">YPTS_1546</name>
</gene>